<feature type="chain" id="PRO_0000369980" description="3-deoxy-manno-octulosonate cytidylyltransferase">
    <location>
        <begin position="1"/>
        <end position="262"/>
    </location>
</feature>
<sequence>MPPRVSRFNLPEPAPRVETGTVKAIAVIPARIASTRLPRKILREIDGRTMLDRVYNAAKGAPMLADVIVATDSQEIMDVCNRHGWNARLTSDQHRSGTDRVHEVAQTVAADVYVNVQGDEPLARPEHLNTLLELMRDETVQVGTLKTPCGKEDVANPNAVKVVTDKTGRALYFSRSTVPYDRDNRGDIAYFKHLGFYAYRKPTLDRFCGWPESSLERSERLEQLRFLENGVDIYVAETPYDTIGVDTEADLKRVEEILRSRN</sequence>
<comment type="function">
    <text evidence="1">Activates KDO (a required 8-carbon sugar) for incorporation into bacterial lipopolysaccharide in Gram-negative bacteria.</text>
</comment>
<comment type="catalytic activity">
    <reaction evidence="1">
        <text>3-deoxy-alpha-D-manno-oct-2-ulosonate + CTP = CMP-3-deoxy-beta-D-manno-octulosonate + diphosphate</text>
        <dbReference type="Rhea" id="RHEA:23448"/>
        <dbReference type="ChEBI" id="CHEBI:33019"/>
        <dbReference type="ChEBI" id="CHEBI:37563"/>
        <dbReference type="ChEBI" id="CHEBI:85986"/>
        <dbReference type="ChEBI" id="CHEBI:85987"/>
        <dbReference type="EC" id="2.7.7.38"/>
    </reaction>
</comment>
<comment type="pathway">
    <text evidence="1">Nucleotide-sugar biosynthesis; CMP-3-deoxy-D-manno-octulosonate biosynthesis; CMP-3-deoxy-D-manno-octulosonate from 3-deoxy-D-manno-octulosonate and CTP: step 1/1.</text>
</comment>
<comment type="pathway">
    <text evidence="1">Bacterial outer membrane biogenesis; lipopolysaccharide biosynthesis.</text>
</comment>
<comment type="subcellular location">
    <subcellularLocation>
        <location evidence="1">Cytoplasm</location>
    </subcellularLocation>
</comment>
<comment type="similarity">
    <text evidence="1">Belongs to the KdsB family.</text>
</comment>
<accession>Q1IU72</accession>
<proteinExistence type="inferred from homology"/>
<reference key="1">
    <citation type="journal article" date="2009" name="Appl. Environ. Microbiol.">
        <title>Three genomes from the phylum Acidobacteria provide insight into the lifestyles of these microorganisms in soils.</title>
        <authorList>
            <person name="Ward N.L."/>
            <person name="Challacombe J.F."/>
            <person name="Janssen P.H."/>
            <person name="Henrissat B."/>
            <person name="Coutinho P.M."/>
            <person name="Wu M."/>
            <person name="Xie G."/>
            <person name="Haft D.H."/>
            <person name="Sait M."/>
            <person name="Badger J."/>
            <person name="Barabote R.D."/>
            <person name="Bradley B."/>
            <person name="Brettin T.S."/>
            <person name="Brinkac L.M."/>
            <person name="Bruce D."/>
            <person name="Creasy T."/>
            <person name="Daugherty S.C."/>
            <person name="Davidsen T.M."/>
            <person name="DeBoy R.T."/>
            <person name="Detter J.C."/>
            <person name="Dodson R.J."/>
            <person name="Durkin A.S."/>
            <person name="Ganapathy A."/>
            <person name="Gwinn-Giglio M."/>
            <person name="Han C.S."/>
            <person name="Khouri H."/>
            <person name="Kiss H."/>
            <person name="Kothari S.P."/>
            <person name="Madupu R."/>
            <person name="Nelson K.E."/>
            <person name="Nelson W.C."/>
            <person name="Paulsen I."/>
            <person name="Penn K."/>
            <person name="Ren Q."/>
            <person name="Rosovitz M.J."/>
            <person name="Selengut J.D."/>
            <person name="Shrivastava S."/>
            <person name="Sullivan S.A."/>
            <person name="Tapia R."/>
            <person name="Thompson L.S."/>
            <person name="Watkins K.L."/>
            <person name="Yang Q."/>
            <person name="Yu C."/>
            <person name="Zafar N."/>
            <person name="Zhou L."/>
            <person name="Kuske C.R."/>
        </authorList>
    </citation>
    <scope>NUCLEOTIDE SEQUENCE [LARGE SCALE GENOMIC DNA]</scope>
    <source>
        <strain>Ellin345</strain>
    </source>
</reference>
<protein>
    <recommendedName>
        <fullName evidence="1">3-deoxy-manno-octulosonate cytidylyltransferase</fullName>
        <ecNumber evidence="1">2.7.7.38</ecNumber>
    </recommendedName>
    <alternativeName>
        <fullName evidence="1">CMP-2-keto-3-deoxyoctulosonic acid synthase</fullName>
        <shortName evidence="1">CKS</shortName>
        <shortName evidence="1">CMP-KDO synthase</shortName>
    </alternativeName>
</protein>
<gene>
    <name evidence="1" type="primary">kdsB</name>
    <name type="ordered locus">Acid345_0573</name>
</gene>
<name>KDSB_KORVE</name>
<organism>
    <name type="scientific">Koribacter versatilis (strain Ellin345)</name>
    <dbReference type="NCBI Taxonomy" id="204669"/>
    <lineage>
        <taxon>Bacteria</taxon>
        <taxon>Pseudomonadati</taxon>
        <taxon>Acidobacteriota</taxon>
        <taxon>Terriglobia</taxon>
        <taxon>Terriglobales</taxon>
        <taxon>Candidatus Korobacteraceae</taxon>
        <taxon>Candidatus Korobacter</taxon>
    </lineage>
</organism>
<dbReference type="EC" id="2.7.7.38" evidence="1"/>
<dbReference type="EMBL" id="CP000360">
    <property type="protein sequence ID" value="ABF39578.1"/>
    <property type="molecule type" value="Genomic_DNA"/>
</dbReference>
<dbReference type="RefSeq" id="WP_011521380.1">
    <property type="nucleotide sequence ID" value="NC_008009.1"/>
</dbReference>
<dbReference type="SMR" id="Q1IU72"/>
<dbReference type="STRING" id="204669.Acid345_0573"/>
<dbReference type="EnsemblBacteria" id="ABF39578">
    <property type="protein sequence ID" value="ABF39578"/>
    <property type="gene ID" value="Acid345_0573"/>
</dbReference>
<dbReference type="KEGG" id="aba:Acid345_0573"/>
<dbReference type="eggNOG" id="COG1212">
    <property type="taxonomic scope" value="Bacteria"/>
</dbReference>
<dbReference type="HOGENOM" id="CLU_065038_0_1_0"/>
<dbReference type="OrthoDB" id="9815559at2"/>
<dbReference type="UniPathway" id="UPA00030"/>
<dbReference type="UniPathway" id="UPA00358">
    <property type="reaction ID" value="UER00476"/>
</dbReference>
<dbReference type="Proteomes" id="UP000002432">
    <property type="component" value="Chromosome"/>
</dbReference>
<dbReference type="GO" id="GO:0005829">
    <property type="term" value="C:cytosol"/>
    <property type="evidence" value="ECO:0007669"/>
    <property type="project" value="TreeGrafter"/>
</dbReference>
<dbReference type="GO" id="GO:0008690">
    <property type="term" value="F:3-deoxy-manno-octulosonate cytidylyltransferase activity"/>
    <property type="evidence" value="ECO:0007669"/>
    <property type="project" value="UniProtKB-UniRule"/>
</dbReference>
<dbReference type="GO" id="GO:0033468">
    <property type="term" value="P:CMP-keto-3-deoxy-D-manno-octulosonic acid biosynthetic process"/>
    <property type="evidence" value="ECO:0007669"/>
    <property type="project" value="UniProtKB-UniRule"/>
</dbReference>
<dbReference type="GO" id="GO:0009103">
    <property type="term" value="P:lipopolysaccharide biosynthetic process"/>
    <property type="evidence" value="ECO:0007669"/>
    <property type="project" value="UniProtKB-UniRule"/>
</dbReference>
<dbReference type="CDD" id="cd02517">
    <property type="entry name" value="CMP-KDO-Synthetase"/>
    <property type="match status" value="1"/>
</dbReference>
<dbReference type="Gene3D" id="3.90.550.10">
    <property type="entry name" value="Spore Coat Polysaccharide Biosynthesis Protein SpsA, Chain A"/>
    <property type="match status" value="1"/>
</dbReference>
<dbReference type="HAMAP" id="MF_00057">
    <property type="entry name" value="KdsB"/>
    <property type="match status" value="1"/>
</dbReference>
<dbReference type="InterPro" id="IPR003329">
    <property type="entry name" value="Cytidylyl_trans"/>
</dbReference>
<dbReference type="InterPro" id="IPR004528">
    <property type="entry name" value="KdsB"/>
</dbReference>
<dbReference type="InterPro" id="IPR029044">
    <property type="entry name" value="Nucleotide-diphossugar_trans"/>
</dbReference>
<dbReference type="NCBIfam" id="TIGR00466">
    <property type="entry name" value="kdsB"/>
    <property type="match status" value="1"/>
</dbReference>
<dbReference type="NCBIfam" id="NF003952">
    <property type="entry name" value="PRK05450.1-5"/>
    <property type="match status" value="1"/>
</dbReference>
<dbReference type="NCBIfam" id="NF009905">
    <property type="entry name" value="PRK13368.1"/>
    <property type="match status" value="1"/>
</dbReference>
<dbReference type="PANTHER" id="PTHR42866">
    <property type="entry name" value="3-DEOXY-MANNO-OCTULOSONATE CYTIDYLYLTRANSFERASE"/>
    <property type="match status" value="1"/>
</dbReference>
<dbReference type="PANTHER" id="PTHR42866:SF2">
    <property type="entry name" value="3-DEOXY-MANNO-OCTULOSONATE CYTIDYLYLTRANSFERASE, MITOCHONDRIAL"/>
    <property type="match status" value="1"/>
</dbReference>
<dbReference type="Pfam" id="PF02348">
    <property type="entry name" value="CTP_transf_3"/>
    <property type="match status" value="1"/>
</dbReference>
<dbReference type="SUPFAM" id="SSF53448">
    <property type="entry name" value="Nucleotide-diphospho-sugar transferases"/>
    <property type="match status" value="1"/>
</dbReference>
<keyword id="KW-0963">Cytoplasm</keyword>
<keyword id="KW-0448">Lipopolysaccharide biosynthesis</keyword>
<keyword id="KW-0548">Nucleotidyltransferase</keyword>
<keyword id="KW-1185">Reference proteome</keyword>
<keyword id="KW-0808">Transferase</keyword>
<evidence type="ECO:0000255" key="1">
    <source>
        <dbReference type="HAMAP-Rule" id="MF_00057"/>
    </source>
</evidence>